<name>LUXS_LACLM</name>
<keyword id="KW-0071">Autoinducer synthesis</keyword>
<keyword id="KW-0408">Iron</keyword>
<keyword id="KW-0456">Lyase</keyword>
<keyword id="KW-0479">Metal-binding</keyword>
<keyword id="KW-0673">Quorum sensing</keyword>
<organism>
    <name type="scientific">Lactococcus lactis subsp. cremoris (strain MG1363)</name>
    <dbReference type="NCBI Taxonomy" id="416870"/>
    <lineage>
        <taxon>Bacteria</taxon>
        <taxon>Bacillati</taxon>
        <taxon>Bacillota</taxon>
        <taxon>Bacilli</taxon>
        <taxon>Lactobacillales</taxon>
        <taxon>Streptococcaceae</taxon>
        <taxon>Lactococcus</taxon>
        <taxon>Lactococcus cremoris subsp. cremoris</taxon>
    </lineage>
</organism>
<evidence type="ECO:0000255" key="1">
    <source>
        <dbReference type="HAMAP-Rule" id="MF_00091"/>
    </source>
</evidence>
<sequence length="158" mass="17605">MAEVESFQLDHTKVLAPYVRLIGSETGPKGDVITNFDVRFVQPNANAIGMAALHTIEHSMASLIRDRIDGMIDFSPFGCQTGFHMIMWGEHSSEEIAKVIKSSLEELSSDEFGWDNVPGVAEKECGNYRNHSLFGAKEWSKKILAEGISTDPYERKVI</sequence>
<dbReference type="EC" id="4.4.1.21" evidence="1"/>
<dbReference type="EMBL" id="AM406671">
    <property type="protein sequence ID" value="CAL96880.1"/>
    <property type="molecule type" value="Genomic_DNA"/>
</dbReference>
<dbReference type="RefSeq" id="WP_011834348.1">
    <property type="nucleotide sequence ID" value="NC_009004.1"/>
</dbReference>
<dbReference type="SMR" id="A2RHY8"/>
<dbReference type="STRING" id="416870.llmg_0273"/>
<dbReference type="GeneID" id="61108580"/>
<dbReference type="KEGG" id="llm:llmg_0273"/>
<dbReference type="eggNOG" id="COG1854">
    <property type="taxonomic scope" value="Bacteria"/>
</dbReference>
<dbReference type="HOGENOM" id="CLU_107531_2_1_9"/>
<dbReference type="OrthoDB" id="9788129at2"/>
<dbReference type="PhylomeDB" id="A2RHY8"/>
<dbReference type="Proteomes" id="UP000000364">
    <property type="component" value="Chromosome"/>
</dbReference>
<dbReference type="GO" id="GO:0005506">
    <property type="term" value="F:iron ion binding"/>
    <property type="evidence" value="ECO:0007669"/>
    <property type="project" value="InterPro"/>
</dbReference>
<dbReference type="GO" id="GO:0043768">
    <property type="term" value="F:S-ribosylhomocysteine lyase activity"/>
    <property type="evidence" value="ECO:0007669"/>
    <property type="project" value="UniProtKB-UniRule"/>
</dbReference>
<dbReference type="GO" id="GO:0009372">
    <property type="term" value="P:quorum sensing"/>
    <property type="evidence" value="ECO:0007669"/>
    <property type="project" value="UniProtKB-UniRule"/>
</dbReference>
<dbReference type="Gene3D" id="3.30.1360.80">
    <property type="entry name" value="S-ribosylhomocysteinase (LuxS)"/>
    <property type="match status" value="1"/>
</dbReference>
<dbReference type="HAMAP" id="MF_00091">
    <property type="entry name" value="LuxS"/>
    <property type="match status" value="1"/>
</dbReference>
<dbReference type="InterPro" id="IPR037005">
    <property type="entry name" value="LuxS_sf"/>
</dbReference>
<dbReference type="InterPro" id="IPR011249">
    <property type="entry name" value="Metalloenz_LuxS/M16"/>
</dbReference>
<dbReference type="InterPro" id="IPR003815">
    <property type="entry name" value="S-ribosylhomocysteinase"/>
</dbReference>
<dbReference type="NCBIfam" id="NF002609">
    <property type="entry name" value="PRK02260.3-2"/>
    <property type="match status" value="1"/>
</dbReference>
<dbReference type="PANTHER" id="PTHR35799">
    <property type="entry name" value="S-RIBOSYLHOMOCYSTEINE LYASE"/>
    <property type="match status" value="1"/>
</dbReference>
<dbReference type="PANTHER" id="PTHR35799:SF1">
    <property type="entry name" value="S-RIBOSYLHOMOCYSTEINE LYASE"/>
    <property type="match status" value="1"/>
</dbReference>
<dbReference type="Pfam" id="PF02664">
    <property type="entry name" value="LuxS"/>
    <property type="match status" value="1"/>
</dbReference>
<dbReference type="PIRSF" id="PIRSF006160">
    <property type="entry name" value="AI2"/>
    <property type="match status" value="1"/>
</dbReference>
<dbReference type="PRINTS" id="PR01487">
    <property type="entry name" value="LUXSPROTEIN"/>
</dbReference>
<dbReference type="SUPFAM" id="SSF63411">
    <property type="entry name" value="LuxS/MPP-like metallohydrolase"/>
    <property type="match status" value="1"/>
</dbReference>
<feature type="chain" id="PRO_0000298011" description="S-ribosylhomocysteine lyase">
    <location>
        <begin position="1"/>
        <end position="158"/>
    </location>
</feature>
<feature type="binding site" evidence="1">
    <location>
        <position position="54"/>
    </location>
    <ligand>
        <name>Fe cation</name>
        <dbReference type="ChEBI" id="CHEBI:24875"/>
    </ligand>
</feature>
<feature type="binding site" evidence="1">
    <location>
        <position position="58"/>
    </location>
    <ligand>
        <name>Fe cation</name>
        <dbReference type="ChEBI" id="CHEBI:24875"/>
    </ligand>
</feature>
<feature type="binding site" evidence="1">
    <location>
        <position position="125"/>
    </location>
    <ligand>
        <name>Fe cation</name>
        <dbReference type="ChEBI" id="CHEBI:24875"/>
    </ligand>
</feature>
<proteinExistence type="inferred from homology"/>
<accession>A2RHY8</accession>
<protein>
    <recommendedName>
        <fullName evidence="1">S-ribosylhomocysteine lyase</fullName>
        <ecNumber evidence="1">4.4.1.21</ecNumber>
    </recommendedName>
    <alternativeName>
        <fullName evidence="1">AI-2 synthesis protein</fullName>
    </alternativeName>
    <alternativeName>
        <fullName evidence="1">Autoinducer-2 production protein LuxS</fullName>
    </alternativeName>
</protein>
<reference key="1">
    <citation type="journal article" date="2007" name="J. Bacteriol.">
        <title>The complete genome sequence of the lactic acid bacterial paradigm Lactococcus lactis subsp. cremoris MG1363.</title>
        <authorList>
            <person name="Wegmann U."/>
            <person name="O'Connell-Motherway M."/>
            <person name="Zomer A."/>
            <person name="Buist G."/>
            <person name="Shearman C."/>
            <person name="Canchaya C."/>
            <person name="Ventura M."/>
            <person name="Goesmann A."/>
            <person name="Gasson M.J."/>
            <person name="Kuipers O.P."/>
            <person name="van Sinderen D."/>
            <person name="Kok J."/>
        </authorList>
    </citation>
    <scope>NUCLEOTIDE SEQUENCE [LARGE SCALE GENOMIC DNA]</scope>
    <source>
        <strain>MG1363</strain>
    </source>
</reference>
<gene>
    <name evidence="1" type="primary">luxS</name>
    <name type="ordered locus">llmg_0273</name>
</gene>
<comment type="function">
    <text evidence="1">Involved in the synthesis of autoinducer 2 (AI-2) which is secreted by bacteria and is used to communicate both the cell density and the metabolic potential of the environment. The regulation of gene expression in response to changes in cell density is called quorum sensing. Catalyzes the transformation of S-ribosylhomocysteine (RHC) to homocysteine (HC) and 4,5-dihydroxy-2,3-pentadione (DPD).</text>
</comment>
<comment type="catalytic activity">
    <reaction evidence="1">
        <text>S-(5-deoxy-D-ribos-5-yl)-L-homocysteine = (S)-4,5-dihydroxypentane-2,3-dione + L-homocysteine</text>
        <dbReference type="Rhea" id="RHEA:17753"/>
        <dbReference type="ChEBI" id="CHEBI:29484"/>
        <dbReference type="ChEBI" id="CHEBI:58195"/>
        <dbReference type="ChEBI" id="CHEBI:58199"/>
        <dbReference type="EC" id="4.4.1.21"/>
    </reaction>
</comment>
<comment type="cofactor">
    <cofactor evidence="1">
        <name>Fe cation</name>
        <dbReference type="ChEBI" id="CHEBI:24875"/>
    </cofactor>
    <text evidence="1">Binds 1 Fe cation per subunit.</text>
</comment>
<comment type="subunit">
    <text evidence="1">Homodimer.</text>
</comment>
<comment type="similarity">
    <text evidence="1">Belongs to the LuxS family.</text>
</comment>